<dbReference type="EMBL" id="CP000260">
    <property type="protein sequence ID" value="ABF34935.1"/>
    <property type="molecule type" value="Genomic_DNA"/>
</dbReference>
<dbReference type="SMR" id="Q1JEH4"/>
<dbReference type="KEGG" id="sph:MGAS10270_Spy1870"/>
<dbReference type="HOGENOM" id="CLU_087936_1_0_9"/>
<dbReference type="Proteomes" id="UP000002436">
    <property type="component" value="Chromosome"/>
</dbReference>
<dbReference type="GO" id="GO:0005737">
    <property type="term" value="C:cytoplasm"/>
    <property type="evidence" value="ECO:0007669"/>
    <property type="project" value="UniProtKB-SubCell"/>
</dbReference>
<dbReference type="GO" id="GO:0009379">
    <property type="term" value="C:Holliday junction helicase complex"/>
    <property type="evidence" value="ECO:0007669"/>
    <property type="project" value="InterPro"/>
</dbReference>
<dbReference type="GO" id="GO:0048476">
    <property type="term" value="C:Holliday junction resolvase complex"/>
    <property type="evidence" value="ECO:0007669"/>
    <property type="project" value="UniProtKB-UniRule"/>
</dbReference>
<dbReference type="GO" id="GO:0005524">
    <property type="term" value="F:ATP binding"/>
    <property type="evidence" value="ECO:0007669"/>
    <property type="project" value="InterPro"/>
</dbReference>
<dbReference type="GO" id="GO:0000400">
    <property type="term" value="F:four-way junction DNA binding"/>
    <property type="evidence" value="ECO:0007669"/>
    <property type="project" value="UniProtKB-UniRule"/>
</dbReference>
<dbReference type="GO" id="GO:0009378">
    <property type="term" value="F:four-way junction helicase activity"/>
    <property type="evidence" value="ECO:0007669"/>
    <property type="project" value="InterPro"/>
</dbReference>
<dbReference type="GO" id="GO:0006310">
    <property type="term" value="P:DNA recombination"/>
    <property type="evidence" value="ECO:0007669"/>
    <property type="project" value="UniProtKB-UniRule"/>
</dbReference>
<dbReference type="GO" id="GO:0006281">
    <property type="term" value="P:DNA repair"/>
    <property type="evidence" value="ECO:0007669"/>
    <property type="project" value="UniProtKB-UniRule"/>
</dbReference>
<dbReference type="CDD" id="cd14332">
    <property type="entry name" value="UBA_RuvA_C"/>
    <property type="match status" value="1"/>
</dbReference>
<dbReference type="Gene3D" id="1.10.150.20">
    <property type="entry name" value="5' to 3' exonuclease, C-terminal subdomain"/>
    <property type="match status" value="1"/>
</dbReference>
<dbReference type="Gene3D" id="1.10.8.10">
    <property type="entry name" value="DNA helicase RuvA subunit, C-terminal domain"/>
    <property type="match status" value="1"/>
</dbReference>
<dbReference type="Gene3D" id="2.40.50.140">
    <property type="entry name" value="Nucleic acid-binding proteins"/>
    <property type="match status" value="1"/>
</dbReference>
<dbReference type="HAMAP" id="MF_00031">
    <property type="entry name" value="DNA_HJ_migration_RuvA"/>
    <property type="match status" value="1"/>
</dbReference>
<dbReference type="InterPro" id="IPR013849">
    <property type="entry name" value="DNA_helicase_Holl-junc_RuvA_I"/>
</dbReference>
<dbReference type="InterPro" id="IPR003583">
    <property type="entry name" value="Hlx-hairpin-Hlx_DNA-bd_motif"/>
</dbReference>
<dbReference type="InterPro" id="IPR012340">
    <property type="entry name" value="NA-bd_OB-fold"/>
</dbReference>
<dbReference type="InterPro" id="IPR000085">
    <property type="entry name" value="RuvA"/>
</dbReference>
<dbReference type="InterPro" id="IPR010994">
    <property type="entry name" value="RuvA_2-like"/>
</dbReference>
<dbReference type="InterPro" id="IPR011114">
    <property type="entry name" value="RuvA_C"/>
</dbReference>
<dbReference type="InterPro" id="IPR036267">
    <property type="entry name" value="RuvA_C_sf"/>
</dbReference>
<dbReference type="NCBIfam" id="TIGR00084">
    <property type="entry name" value="ruvA"/>
    <property type="match status" value="1"/>
</dbReference>
<dbReference type="Pfam" id="PF14520">
    <property type="entry name" value="HHH_5"/>
    <property type="match status" value="1"/>
</dbReference>
<dbReference type="Pfam" id="PF07499">
    <property type="entry name" value="RuvA_C"/>
    <property type="match status" value="1"/>
</dbReference>
<dbReference type="Pfam" id="PF01330">
    <property type="entry name" value="RuvA_N"/>
    <property type="match status" value="1"/>
</dbReference>
<dbReference type="SMART" id="SM00278">
    <property type="entry name" value="HhH1"/>
    <property type="match status" value="2"/>
</dbReference>
<dbReference type="SUPFAM" id="SSF46929">
    <property type="entry name" value="DNA helicase RuvA subunit, C-terminal domain"/>
    <property type="match status" value="1"/>
</dbReference>
<dbReference type="SUPFAM" id="SSF50249">
    <property type="entry name" value="Nucleic acid-binding proteins"/>
    <property type="match status" value="1"/>
</dbReference>
<dbReference type="SUPFAM" id="SSF47781">
    <property type="entry name" value="RuvA domain 2-like"/>
    <property type="match status" value="1"/>
</dbReference>
<accession>Q1JEH4</accession>
<organism>
    <name type="scientific">Streptococcus pyogenes serotype M2 (strain MGAS10270)</name>
    <dbReference type="NCBI Taxonomy" id="370552"/>
    <lineage>
        <taxon>Bacteria</taxon>
        <taxon>Bacillati</taxon>
        <taxon>Bacillota</taxon>
        <taxon>Bacilli</taxon>
        <taxon>Lactobacillales</taxon>
        <taxon>Streptococcaceae</taxon>
        <taxon>Streptococcus</taxon>
    </lineage>
</organism>
<feature type="chain" id="PRO_1000002569" description="Holliday junction branch migration complex subunit RuvA">
    <location>
        <begin position="1"/>
        <end position="198"/>
    </location>
</feature>
<feature type="region of interest" description="Domain I" evidence="1">
    <location>
        <begin position="1"/>
        <end position="63"/>
    </location>
</feature>
<feature type="region of interest" description="Domain II" evidence="1">
    <location>
        <begin position="64"/>
        <end position="142"/>
    </location>
</feature>
<feature type="region of interest" description="Flexible linker" evidence="1">
    <location>
        <begin position="143"/>
        <end position="147"/>
    </location>
</feature>
<feature type="region of interest" description="Domain III" evidence="1">
    <location>
        <begin position="148"/>
        <end position="198"/>
    </location>
</feature>
<evidence type="ECO:0000255" key="1">
    <source>
        <dbReference type="HAMAP-Rule" id="MF_00031"/>
    </source>
</evidence>
<sequence>MYDYIKGQLTKITAKYIVVEANGLGYMINVANPYSFTDSVNQLVTIYLHQVIREDAHLLFGFHTEDEKDVFLKLISVSGIGPTTALAIVAVDDNEGLVNAIDNSDIKYLMKFPKIGKKTAQQMVLDLAGKFVEAPQETGHTKARSNKAGNTQLDEAIEALLALGYKAKELKKIRAFFEETSETAEQYIKSALKLLMKG</sequence>
<proteinExistence type="inferred from homology"/>
<comment type="function">
    <text evidence="1">The RuvA-RuvB-RuvC complex processes Holliday junction (HJ) DNA during genetic recombination and DNA repair, while the RuvA-RuvB complex plays an important role in the rescue of blocked DNA replication forks via replication fork reversal (RFR). RuvA specifically binds to HJ cruciform DNA, conferring on it an open structure. The RuvB hexamer acts as an ATP-dependent pump, pulling dsDNA into and through the RuvAB complex. HJ branch migration allows RuvC to scan DNA until it finds its consensus sequence, where it cleaves and resolves the cruciform DNA.</text>
</comment>
<comment type="subunit">
    <text evidence="1">Homotetramer. Forms an RuvA(8)-RuvB(12)-Holliday junction (HJ) complex. HJ DNA is sandwiched between 2 RuvA tetramers; dsDNA enters through RuvA and exits via RuvB. An RuvB hexamer assembles on each DNA strand where it exits the tetramer. Each RuvB hexamer is contacted by two RuvA subunits (via domain III) on 2 adjacent RuvB subunits; this complex drives branch migration. In the full resolvosome a probable DNA-RuvA(4)-RuvB(12)-RuvC(2) complex forms which resolves the HJ.</text>
</comment>
<comment type="subcellular location">
    <subcellularLocation>
        <location evidence="1">Cytoplasm</location>
    </subcellularLocation>
</comment>
<comment type="domain">
    <text evidence="1">Has three domains with a flexible linker between the domains II and III and assumes an 'L' shape. Domain III is highly mobile and contacts RuvB.</text>
</comment>
<comment type="similarity">
    <text evidence="1">Belongs to the RuvA family.</text>
</comment>
<gene>
    <name evidence="1" type="primary">ruvA</name>
    <name type="ordered locus">MGAS10270_Spy1870</name>
</gene>
<reference key="1">
    <citation type="journal article" date="2006" name="Proc. Natl. Acad. Sci. U.S.A.">
        <title>Molecular genetic anatomy of inter- and intraserotype variation in the human bacterial pathogen group A Streptococcus.</title>
        <authorList>
            <person name="Beres S.B."/>
            <person name="Richter E.W."/>
            <person name="Nagiec M.J."/>
            <person name="Sumby P."/>
            <person name="Porcella S.F."/>
            <person name="DeLeo F.R."/>
            <person name="Musser J.M."/>
        </authorList>
    </citation>
    <scope>NUCLEOTIDE SEQUENCE [LARGE SCALE GENOMIC DNA]</scope>
    <source>
        <strain>MGAS10270</strain>
    </source>
</reference>
<protein>
    <recommendedName>
        <fullName evidence="1">Holliday junction branch migration complex subunit RuvA</fullName>
    </recommendedName>
</protein>
<keyword id="KW-0963">Cytoplasm</keyword>
<keyword id="KW-0227">DNA damage</keyword>
<keyword id="KW-0233">DNA recombination</keyword>
<keyword id="KW-0234">DNA repair</keyword>
<keyword id="KW-0238">DNA-binding</keyword>
<name>RUVA_STRPD</name>